<accession>O73885</accession>
<keyword id="KW-0067">ATP-binding</keyword>
<keyword id="KW-0072">Autophagy</keyword>
<keyword id="KW-1003">Cell membrane</keyword>
<keyword id="KW-0143">Chaperone</keyword>
<keyword id="KW-0963">Cytoplasm</keyword>
<keyword id="KW-0458">Lysosome</keyword>
<keyword id="KW-0472">Membrane</keyword>
<keyword id="KW-0547">Nucleotide-binding</keyword>
<keyword id="KW-0539">Nucleus</keyword>
<keyword id="KW-1185">Reference proteome</keyword>
<keyword id="KW-0346">Stress response</keyword>
<proteinExistence type="evidence at protein level"/>
<sequence length="646" mass="70827">MSKGPAVGIDLGTTYSCVGVFQHGKVEIIANDQGNRTTPSYVAFTDTERLIGDAAKNQVAMNPTNTVFDAKRLIGRRFDDSVVQSDMKHWPFTVVNDAGRPKVQVEYKGETKSFYPEEISSMVLTKMKEIAEAYLGKTVTNAVVTVPAYFNDSQRQGTKDAGTIAGLNVLRIINEPTAAAIAYGLDKKVGAERNLLIFDLGGGTFDVSILTIENGIFEVKSTAGDTHLGGEDFDNRLVNHFIAEFKRKHKKDISENKRAVRRLRTACERAKRTLSSSTQASIEIDSLYEGIDFYTSITRARFEKLNADLFRGTLDPVEKALRDAKLDKSQIHDIVLVGGSTRIPKIQKLLQDFFNGKELNKSINPDEAVAYGAAVQAAILSGDKSENVQDLLLLDVTPLSLGIETAGGVMTVLIKRNTTIPTKQTQTFTTYSDNQPGVLIQVYEGERAMTKDNNLLGKFELTGIPPAPRGVPQIEVTFDIDANGILNVSAVDKSTGKENKITITNDKGRLSKEDIERMVQEAEKYKAEDEKQRDKVSSKNSLDSYAFNMKATVEDEKLPGKILDEDHQNILDKCNEIINWLDKNQTAEKEEFEHQQKELEKVCNPIITKLYQSAGGMPGGMPGGFPGGGAPPSGGASSGPTIEEVD</sequence>
<name>HSP7C_CHICK</name>
<evidence type="ECO:0000250" key="1">
    <source>
        <dbReference type="UniProtKB" id="P11142"/>
    </source>
</evidence>
<evidence type="ECO:0000250" key="2">
    <source>
        <dbReference type="UniProtKB" id="P19120"/>
    </source>
</evidence>
<evidence type="ECO:0000256" key="3">
    <source>
        <dbReference type="SAM" id="MobiDB-lite"/>
    </source>
</evidence>
<evidence type="ECO:0000269" key="4">
    <source>
    </source>
</evidence>
<evidence type="ECO:0000305" key="5"/>
<dbReference type="EMBL" id="AJ004940">
    <property type="protein sequence ID" value="CAA06233.1"/>
    <property type="molecule type" value="mRNA"/>
</dbReference>
<dbReference type="RefSeq" id="NP_990334.1">
    <property type="nucleotide sequence ID" value="NM_205003.2"/>
</dbReference>
<dbReference type="BMRB" id="O73885"/>
<dbReference type="SMR" id="O73885"/>
<dbReference type="BioGRID" id="676126">
    <property type="interactions" value="3"/>
</dbReference>
<dbReference type="FunCoup" id="O73885">
    <property type="interactions" value="2639"/>
</dbReference>
<dbReference type="IntAct" id="O73885">
    <property type="interactions" value="1"/>
</dbReference>
<dbReference type="STRING" id="9031.ENSGALP00000051563"/>
<dbReference type="PaxDb" id="9031-ENSGALP00000010510"/>
<dbReference type="GeneID" id="395853"/>
<dbReference type="KEGG" id="gga:395853"/>
<dbReference type="CTD" id="3312"/>
<dbReference type="VEuPathDB" id="HostDB:geneid_395853"/>
<dbReference type="eggNOG" id="KOG0101">
    <property type="taxonomic scope" value="Eukaryota"/>
</dbReference>
<dbReference type="InParanoid" id="O73885"/>
<dbReference type="OrthoDB" id="2401965at2759"/>
<dbReference type="PhylomeDB" id="O73885"/>
<dbReference type="PRO" id="PR:O73885"/>
<dbReference type="Proteomes" id="UP000000539">
    <property type="component" value="Unassembled WGS sequence"/>
</dbReference>
<dbReference type="GO" id="GO:0005737">
    <property type="term" value="C:cytoplasm"/>
    <property type="evidence" value="ECO:0000315"/>
    <property type="project" value="AgBase"/>
</dbReference>
<dbReference type="GO" id="GO:0005829">
    <property type="term" value="C:cytosol"/>
    <property type="evidence" value="ECO:0000318"/>
    <property type="project" value="GO_Central"/>
</dbReference>
<dbReference type="GO" id="GO:0005765">
    <property type="term" value="C:lysosomal membrane"/>
    <property type="evidence" value="ECO:0000250"/>
    <property type="project" value="UniProtKB"/>
</dbReference>
<dbReference type="GO" id="GO:0005730">
    <property type="term" value="C:nucleolus"/>
    <property type="evidence" value="ECO:0007669"/>
    <property type="project" value="UniProtKB-SubCell"/>
</dbReference>
<dbReference type="GO" id="GO:0005634">
    <property type="term" value="C:nucleus"/>
    <property type="evidence" value="ECO:0000315"/>
    <property type="project" value="AgBase"/>
</dbReference>
<dbReference type="GO" id="GO:0005886">
    <property type="term" value="C:plasma membrane"/>
    <property type="evidence" value="ECO:0000318"/>
    <property type="project" value="GO_Central"/>
</dbReference>
<dbReference type="GO" id="GO:1990904">
    <property type="term" value="C:ribonucleoprotein complex"/>
    <property type="evidence" value="ECO:0000250"/>
    <property type="project" value="UniProtKB"/>
</dbReference>
<dbReference type="GO" id="GO:0005524">
    <property type="term" value="F:ATP binding"/>
    <property type="evidence" value="ECO:0007669"/>
    <property type="project" value="UniProtKB-KW"/>
</dbReference>
<dbReference type="GO" id="GO:0016887">
    <property type="term" value="F:ATP hydrolysis activity"/>
    <property type="evidence" value="ECO:0000318"/>
    <property type="project" value="GO_Central"/>
</dbReference>
<dbReference type="GO" id="GO:0140662">
    <property type="term" value="F:ATP-dependent protein folding chaperone"/>
    <property type="evidence" value="ECO:0007669"/>
    <property type="project" value="InterPro"/>
</dbReference>
<dbReference type="GO" id="GO:0031072">
    <property type="term" value="F:heat shock protein binding"/>
    <property type="evidence" value="ECO:0000318"/>
    <property type="project" value="GO_Central"/>
</dbReference>
<dbReference type="GO" id="GO:0051219">
    <property type="term" value="F:phosphoprotein binding"/>
    <property type="evidence" value="ECO:0000353"/>
    <property type="project" value="AgBase"/>
</dbReference>
<dbReference type="GO" id="GO:0044183">
    <property type="term" value="F:protein folding chaperone"/>
    <property type="evidence" value="ECO:0000318"/>
    <property type="project" value="GO_Central"/>
</dbReference>
<dbReference type="GO" id="GO:0030674">
    <property type="term" value="F:protein-macromolecule adaptor activity"/>
    <property type="evidence" value="ECO:0000250"/>
    <property type="project" value="UniProtKB"/>
</dbReference>
<dbReference type="GO" id="GO:0051085">
    <property type="term" value="P:chaperone cofactor-dependent protein refolding"/>
    <property type="evidence" value="ECO:0000318"/>
    <property type="project" value="GO_Central"/>
</dbReference>
<dbReference type="GO" id="GO:0072318">
    <property type="term" value="P:clathrin coat disassembly"/>
    <property type="evidence" value="ECO:0000314"/>
    <property type="project" value="UniProtKB"/>
</dbReference>
<dbReference type="GO" id="GO:0009792">
    <property type="term" value="P:embryo development ending in birth or egg hatching"/>
    <property type="evidence" value="ECO:0000270"/>
    <property type="project" value="AgBase"/>
</dbReference>
<dbReference type="GO" id="GO:0048568">
    <property type="term" value="P:embryonic organ development"/>
    <property type="evidence" value="ECO:0000270"/>
    <property type="project" value="AgBase"/>
</dbReference>
<dbReference type="GO" id="GO:0007369">
    <property type="term" value="P:gastrulation"/>
    <property type="evidence" value="ECO:0000270"/>
    <property type="project" value="AgBase"/>
</dbReference>
<dbReference type="GO" id="GO:0042026">
    <property type="term" value="P:protein refolding"/>
    <property type="evidence" value="ECO:0000318"/>
    <property type="project" value="GO_Central"/>
</dbReference>
<dbReference type="GO" id="GO:0061740">
    <property type="term" value="P:protein targeting to lysosome involved in chaperone-mediated autophagy"/>
    <property type="evidence" value="ECO:0000250"/>
    <property type="project" value="UniProtKB"/>
</dbReference>
<dbReference type="CDD" id="cd10233">
    <property type="entry name" value="ASKHA_NBD_HSP70_HSPA1"/>
    <property type="match status" value="1"/>
</dbReference>
<dbReference type="FunFam" id="2.60.34.10:FF:000002">
    <property type="entry name" value="Heat shock 70 kDa"/>
    <property type="match status" value="1"/>
</dbReference>
<dbReference type="FunFam" id="3.30.420.40:FF:000172">
    <property type="entry name" value="Heat shock 70 kDa protein"/>
    <property type="match status" value="1"/>
</dbReference>
<dbReference type="FunFam" id="3.30.30.30:FF:000001">
    <property type="entry name" value="heat shock 70 kDa protein-like"/>
    <property type="match status" value="1"/>
</dbReference>
<dbReference type="FunFam" id="3.30.420.40:FF:000028">
    <property type="entry name" value="heat shock 70 kDa protein-like"/>
    <property type="match status" value="1"/>
</dbReference>
<dbReference type="FunFam" id="3.30.420.40:FF:000135">
    <property type="entry name" value="Heat shock cognate 71 kDa protein"/>
    <property type="match status" value="1"/>
</dbReference>
<dbReference type="FunFam" id="3.90.640.10:FF:000134">
    <property type="entry name" value="Heat shock cognate 71 kDa protein"/>
    <property type="match status" value="1"/>
</dbReference>
<dbReference type="FunFam" id="1.20.1270.10:FF:000003">
    <property type="entry name" value="heat shock cognate 71 kDa protein-like"/>
    <property type="match status" value="1"/>
</dbReference>
<dbReference type="FunFam" id="3.30.420.40:FF:000026">
    <property type="entry name" value="Heat shock protein 70"/>
    <property type="match status" value="1"/>
</dbReference>
<dbReference type="Gene3D" id="1.20.1270.10">
    <property type="match status" value="1"/>
</dbReference>
<dbReference type="Gene3D" id="3.30.30.30">
    <property type="match status" value="1"/>
</dbReference>
<dbReference type="Gene3D" id="3.30.420.40">
    <property type="match status" value="2"/>
</dbReference>
<dbReference type="Gene3D" id="3.90.640.10">
    <property type="entry name" value="Actin, Chain A, domain 4"/>
    <property type="match status" value="1"/>
</dbReference>
<dbReference type="Gene3D" id="2.60.34.10">
    <property type="entry name" value="Substrate Binding Domain Of DNAk, Chain A, domain 1"/>
    <property type="match status" value="1"/>
</dbReference>
<dbReference type="InterPro" id="IPR043129">
    <property type="entry name" value="ATPase_NBD"/>
</dbReference>
<dbReference type="InterPro" id="IPR018181">
    <property type="entry name" value="Heat_shock_70_CS"/>
</dbReference>
<dbReference type="InterPro" id="IPR029048">
    <property type="entry name" value="HSP70_C_sf"/>
</dbReference>
<dbReference type="InterPro" id="IPR029047">
    <property type="entry name" value="HSP70_peptide-bd_sf"/>
</dbReference>
<dbReference type="InterPro" id="IPR013126">
    <property type="entry name" value="Hsp_70_fam"/>
</dbReference>
<dbReference type="NCBIfam" id="NF001413">
    <property type="entry name" value="PRK00290.1"/>
    <property type="match status" value="1"/>
</dbReference>
<dbReference type="PANTHER" id="PTHR19375">
    <property type="entry name" value="HEAT SHOCK PROTEIN 70KDA"/>
    <property type="match status" value="1"/>
</dbReference>
<dbReference type="Pfam" id="PF00012">
    <property type="entry name" value="HSP70"/>
    <property type="match status" value="1"/>
</dbReference>
<dbReference type="PRINTS" id="PR00301">
    <property type="entry name" value="HEATSHOCK70"/>
</dbReference>
<dbReference type="SUPFAM" id="SSF53067">
    <property type="entry name" value="Actin-like ATPase domain"/>
    <property type="match status" value="2"/>
</dbReference>
<dbReference type="SUPFAM" id="SSF100934">
    <property type="entry name" value="Heat shock protein 70kD (HSP70), C-terminal subdomain"/>
    <property type="match status" value="1"/>
</dbReference>
<dbReference type="SUPFAM" id="SSF100920">
    <property type="entry name" value="Heat shock protein 70kD (HSP70), peptide-binding domain"/>
    <property type="match status" value="1"/>
</dbReference>
<dbReference type="PROSITE" id="PS00297">
    <property type="entry name" value="HSP70_1"/>
    <property type="match status" value="1"/>
</dbReference>
<dbReference type="PROSITE" id="PS00329">
    <property type="entry name" value="HSP70_2"/>
    <property type="match status" value="1"/>
</dbReference>
<dbReference type="PROSITE" id="PS01036">
    <property type="entry name" value="HSP70_3"/>
    <property type="match status" value="1"/>
</dbReference>
<feature type="chain" id="PRO_0000304725" description="Heat shock cognate 71 kDa protein">
    <location>
        <begin position="1"/>
        <end position="646"/>
    </location>
</feature>
<feature type="region of interest" description="Nucleotide-binding domain (NBD)" evidence="1">
    <location>
        <begin position="2"/>
        <end position="386"/>
    </location>
</feature>
<feature type="region of interest" description="Substrate-binding domain (SBD)" evidence="1">
    <location>
        <begin position="394"/>
        <end position="509"/>
    </location>
</feature>
<feature type="region of interest" description="Disordered" evidence="3">
    <location>
        <begin position="614"/>
        <end position="646"/>
    </location>
</feature>
<feature type="compositionally biased region" description="Gly residues" evidence="3">
    <location>
        <begin position="616"/>
        <end position="632"/>
    </location>
</feature>
<feature type="binding site" evidence="2">
    <location>
        <position position="14"/>
    </location>
    <ligand>
        <name>ADP</name>
        <dbReference type="ChEBI" id="CHEBI:456216"/>
    </ligand>
</feature>
<feature type="binding site" evidence="2">
    <location>
        <position position="15"/>
    </location>
    <ligand>
        <name>ADP</name>
        <dbReference type="ChEBI" id="CHEBI:456216"/>
    </ligand>
</feature>
<feature type="binding site" evidence="2">
    <location>
        <position position="202"/>
    </location>
    <ligand>
        <name>ADP</name>
        <dbReference type="ChEBI" id="CHEBI:456216"/>
    </ligand>
</feature>
<feature type="binding site" evidence="2">
    <location>
        <position position="268"/>
    </location>
    <ligand>
        <name>ADP</name>
        <dbReference type="ChEBI" id="CHEBI:456216"/>
    </ligand>
</feature>
<feature type="binding site" evidence="2">
    <location>
        <position position="271"/>
    </location>
    <ligand>
        <name>ADP</name>
        <dbReference type="ChEBI" id="CHEBI:456216"/>
    </ligand>
</feature>
<feature type="binding site" evidence="2">
    <location>
        <position position="275"/>
    </location>
    <ligand>
        <name>ADP</name>
        <dbReference type="ChEBI" id="CHEBI:456216"/>
    </ligand>
</feature>
<feature type="binding site" evidence="2">
    <location>
        <position position="339"/>
    </location>
    <ligand>
        <name>ADP</name>
        <dbReference type="ChEBI" id="CHEBI:456216"/>
    </ligand>
</feature>
<gene>
    <name evidence="1" type="primary">HSPA8</name>
    <name evidence="1" type="synonym">HSC70</name>
</gene>
<protein>
    <recommendedName>
        <fullName evidence="1">Heat shock cognate 71 kDa protein</fullName>
    </recommendedName>
    <alternativeName>
        <fullName>Heat shock 70 kDa protein 8</fullName>
    </alternativeName>
</protein>
<comment type="function">
    <text evidence="1 2 4">Molecular chaperone implicated in a wide variety of cellular processes, including protection of the proteome from stress, folding and transport of newly synthesized polypeptides, chaperone-mediated autophagy, activation of proteolysis of misfolded proteins and the formation and dissociation of protein complexes (By similarity). Plays a pivotal role in the protein quality control system, ensuring the correct folding of proteins, the re-folding of misfolded proteins and controlling the targeting of proteins for subsequent degradation (By similarity). This is achieved through cycles of ATP binding, ATP hydrolysis and ADP release, mediated by co-chaperones (By similarity). The affinity of HSP70 for polypeptides is regulated by its nucleotide bound state (By similarity). In the ATP-bound form, it has a low affinity for substrate proteins (By similarity). However, upon hydrolysis of the ATP to ADP, it undergoes a conformational change that increases its affinity for substrate proteins (By similarity). HSP70 goes through repeated cycles of ATP hydrolysis and nucleotide exchange, which permits cycles of substrate binding and release (By similarity). Substrate recognition component in chaperone-mediated autophagy (CMA), a selective protein degradation process that mediates degradation of proteins with a -KFERQ motif: HSPA8/HSC70 specifically recognizes and binds cytosolic proteins bearing a -KFERQ motif and promotes their recruitment to the surface of the lysosome where they bind to lysosomal protein LAMP2 (By similarity). KFERQ motif-containing proteins are eventually transported into the lysosomal lumen where they are degraded (By similarity). May play a role in regulating apoptosis during embryonic development (PubMed:9707581). May play a role in uncoating of clathrin-coated vesicles (By similarity).</text>
</comment>
<comment type="subcellular location">
    <subcellularLocation>
        <location evidence="1">Cytoplasm</location>
    </subcellularLocation>
    <subcellularLocation>
        <location evidence="1">Nucleus</location>
        <location evidence="1">Nucleolus</location>
    </subcellularLocation>
    <subcellularLocation>
        <location evidence="1">Cell membrane</location>
    </subcellularLocation>
    <subcellularLocation>
        <location evidence="1">Lysosome membrane</location>
        <topology evidence="1">Peripheral membrane protein</topology>
        <orientation evidence="1">Cytoplasmic side</orientation>
    </subcellularLocation>
    <text evidence="1">Localized in cytoplasmic mRNP granules containing untranslated mRNAs. Translocates rapidly from the cytoplasm to the nuclei, and especially to the nucleoli, upon heat shock.</text>
</comment>
<comment type="developmental stage">
    <text evidence="4">First detected at 0.5 days of embryonic development (at protein level). Detected at higher levels from 1 to 2.5 days of embryonic development (at protein level). First detected at 0.5 days of embryonic development. Levels increase strongly from 1 to 2.5 days of embryonic development.</text>
</comment>
<comment type="induction">
    <text evidence="4">Up-regulated by insulin in cultured embryos.</text>
</comment>
<comment type="domain">
    <text evidence="1">The N-terminal nucleotide binding domain (NBD) (also known as the ATPase domain) is responsible for binding and hydrolyzing ATP. The C-terminal substrate-binding domain (SBD) (also known as peptide-binding domain) binds to the client/substrate proteins. The two domains are allosterically coupled so that, when ATP is bound to the NBD, the SBD binds relatively weakly to clients. When ADP is bound in the NBD, a conformational change enhances the affinity of the SBD for client proteins.</text>
</comment>
<comment type="similarity">
    <text evidence="5">Belongs to the heat shock protein 70 family.</text>
</comment>
<organism>
    <name type="scientific">Gallus gallus</name>
    <name type="common">Chicken</name>
    <dbReference type="NCBI Taxonomy" id="9031"/>
    <lineage>
        <taxon>Eukaryota</taxon>
        <taxon>Metazoa</taxon>
        <taxon>Chordata</taxon>
        <taxon>Craniata</taxon>
        <taxon>Vertebrata</taxon>
        <taxon>Euteleostomi</taxon>
        <taxon>Archelosauria</taxon>
        <taxon>Archosauria</taxon>
        <taxon>Dinosauria</taxon>
        <taxon>Saurischia</taxon>
        <taxon>Theropoda</taxon>
        <taxon>Coelurosauria</taxon>
        <taxon>Aves</taxon>
        <taxon>Neognathae</taxon>
        <taxon>Galloanserae</taxon>
        <taxon>Galliformes</taxon>
        <taxon>Phasianidae</taxon>
        <taxon>Phasianinae</taxon>
        <taxon>Gallus</taxon>
    </lineage>
</organism>
<reference key="1">
    <citation type="journal article" date="1998" name="Proc. Natl. Acad. Sci. U.S.A.">
        <title>Modulation of the chaperone heat shock cognate 70 by embryonic (pro)insulin correlates with prevention of apoptosis.</title>
        <authorList>
            <person name="de la Rosa E.J."/>
            <person name="Vega-Nunez E."/>
            <person name="Morales A.V."/>
            <person name="Serna J."/>
            <person name="Rubio E."/>
            <person name="de Pablo F."/>
        </authorList>
    </citation>
    <scope>NUCLEOTIDE SEQUENCE [MRNA]</scope>
    <scope>FUNCTION</scope>
    <scope>INDUCTION</scope>
    <scope>DEVELOPMENTAL STAGE</scope>
    <source>
        <strain>White leghorn</strain>
        <tissue>Embryo</tissue>
    </source>
</reference>